<reference key="1">
    <citation type="journal article" date="2002" name="Mol. Microbiol.">
        <title>Genome sequence of Streptococcus agalactiae, a pathogen causing invasive neonatal disease.</title>
        <authorList>
            <person name="Glaser P."/>
            <person name="Rusniok C."/>
            <person name="Buchrieser C."/>
            <person name="Chevalier F."/>
            <person name="Frangeul L."/>
            <person name="Msadek T."/>
            <person name="Zouine M."/>
            <person name="Couve E."/>
            <person name="Lalioui L."/>
            <person name="Poyart C."/>
            <person name="Trieu-Cuot P."/>
            <person name="Kunst F."/>
        </authorList>
    </citation>
    <scope>NUCLEOTIDE SEQUENCE [LARGE SCALE GENOMIC DNA]</scope>
    <source>
        <strain>NEM316</strain>
    </source>
</reference>
<protein>
    <recommendedName>
        <fullName evidence="1">Large ribosomal subunit protein uL14</fullName>
    </recommendedName>
    <alternativeName>
        <fullName evidence="2">50S ribosomal protein L14</fullName>
    </alternativeName>
</protein>
<organism>
    <name type="scientific">Streptococcus agalactiae serotype III (strain NEM316)</name>
    <dbReference type="NCBI Taxonomy" id="211110"/>
    <lineage>
        <taxon>Bacteria</taxon>
        <taxon>Bacillati</taxon>
        <taxon>Bacillota</taxon>
        <taxon>Bacilli</taxon>
        <taxon>Lactobacillales</taxon>
        <taxon>Streptococcaceae</taxon>
        <taxon>Streptococcus</taxon>
    </lineage>
</organism>
<name>RL14_STRA3</name>
<evidence type="ECO:0000255" key="1">
    <source>
        <dbReference type="HAMAP-Rule" id="MF_01367"/>
    </source>
</evidence>
<evidence type="ECO:0000305" key="2"/>
<keyword id="KW-0687">Ribonucleoprotein</keyword>
<keyword id="KW-0689">Ribosomal protein</keyword>
<keyword id="KW-0694">RNA-binding</keyword>
<keyword id="KW-0699">rRNA-binding</keyword>
<sequence>MIQQETRLKVADNSGAREILTIKVLGGSGRKFANIGDVIVASVKQATPGGAVKKGDVVKAVIVRTKTGARRPDGSYIKFDDNAAVIIRDDKTPRGTRIFGPVARELREGGYMKIVSLAPEVL</sequence>
<feature type="chain" id="PRO_1000055711" description="Large ribosomal subunit protein uL14">
    <location>
        <begin position="1"/>
        <end position="122"/>
    </location>
</feature>
<proteinExistence type="inferred from homology"/>
<gene>
    <name evidence="1" type="primary">rplN</name>
    <name type="ordered locus">gbs0068</name>
</gene>
<comment type="function">
    <text evidence="1">Binds to 23S rRNA. Forms part of two intersubunit bridges in the 70S ribosome.</text>
</comment>
<comment type="subunit">
    <text evidence="1">Part of the 50S ribosomal subunit. Forms a cluster with proteins L3 and L19. In the 70S ribosome, L14 and L19 interact and together make contacts with the 16S rRNA in bridges B5 and B8.</text>
</comment>
<comment type="similarity">
    <text evidence="1">Belongs to the universal ribosomal protein uL14 family.</text>
</comment>
<accession>Q8E7T1</accession>
<dbReference type="EMBL" id="AL766843">
    <property type="protein sequence ID" value="CAD45713.1"/>
    <property type="molecule type" value="Genomic_DNA"/>
</dbReference>
<dbReference type="RefSeq" id="WP_000615920.1">
    <property type="nucleotide sequence ID" value="NC_004368.1"/>
</dbReference>
<dbReference type="SMR" id="Q8E7T1"/>
<dbReference type="GeneID" id="83689563"/>
<dbReference type="KEGG" id="san:rplN"/>
<dbReference type="eggNOG" id="COG0093">
    <property type="taxonomic scope" value="Bacteria"/>
</dbReference>
<dbReference type="HOGENOM" id="CLU_095071_2_1_9"/>
<dbReference type="Proteomes" id="UP000000823">
    <property type="component" value="Chromosome"/>
</dbReference>
<dbReference type="GO" id="GO:0022625">
    <property type="term" value="C:cytosolic large ribosomal subunit"/>
    <property type="evidence" value="ECO:0007669"/>
    <property type="project" value="TreeGrafter"/>
</dbReference>
<dbReference type="GO" id="GO:0070180">
    <property type="term" value="F:large ribosomal subunit rRNA binding"/>
    <property type="evidence" value="ECO:0007669"/>
    <property type="project" value="TreeGrafter"/>
</dbReference>
<dbReference type="GO" id="GO:0003735">
    <property type="term" value="F:structural constituent of ribosome"/>
    <property type="evidence" value="ECO:0007669"/>
    <property type="project" value="InterPro"/>
</dbReference>
<dbReference type="GO" id="GO:0006412">
    <property type="term" value="P:translation"/>
    <property type="evidence" value="ECO:0007669"/>
    <property type="project" value="UniProtKB-UniRule"/>
</dbReference>
<dbReference type="CDD" id="cd00337">
    <property type="entry name" value="Ribosomal_uL14"/>
    <property type="match status" value="1"/>
</dbReference>
<dbReference type="FunFam" id="2.40.150.20:FF:000001">
    <property type="entry name" value="50S ribosomal protein L14"/>
    <property type="match status" value="1"/>
</dbReference>
<dbReference type="Gene3D" id="2.40.150.20">
    <property type="entry name" value="Ribosomal protein L14"/>
    <property type="match status" value="1"/>
</dbReference>
<dbReference type="HAMAP" id="MF_01367">
    <property type="entry name" value="Ribosomal_uL14"/>
    <property type="match status" value="1"/>
</dbReference>
<dbReference type="InterPro" id="IPR000218">
    <property type="entry name" value="Ribosomal_uL14"/>
</dbReference>
<dbReference type="InterPro" id="IPR005745">
    <property type="entry name" value="Ribosomal_uL14_bac-type"/>
</dbReference>
<dbReference type="InterPro" id="IPR019972">
    <property type="entry name" value="Ribosomal_uL14_CS"/>
</dbReference>
<dbReference type="InterPro" id="IPR036853">
    <property type="entry name" value="Ribosomal_uL14_sf"/>
</dbReference>
<dbReference type="NCBIfam" id="TIGR01067">
    <property type="entry name" value="rplN_bact"/>
    <property type="match status" value="1"/>
</dbReference>
<dbReference type="PANTHER" id="PTHR11761">
    <property type="entry name" value="50S/60S RIBOSOMAL PROTEIN L14/L23"/>
    <property type="match status" value="1"/>
</dbReference>
<dbReference type="PANTHER" id="PTHR11761:SF3">
    <property type="entry name" value="LARGE RIBOSOMAL SUBUNIT PROTEIN UL14M"/>
    <property type="match status" value="1"/>
</dbReference>
<dbReference type="Pfam" id="PF00238">
    <property type="entry name" value="Ribosomal_L14"/>
    <property type="match status" value="1"/>
</dbReference>
<dbReference type="SMART" id="SM01374">
    <property type="entry name" value="Ribosomal_L14"/>
    <property type="match status" value="1"/>
</dbReference>
<dbReference type="SUPFAM" id="SSF50193">
    <property type="entry name" value="Ribosomal protein L14"/>
    <property type="match status" value="1"/>
</dbReference>
<dbReference type="PROSITE" id="PS00049">
    <property type="entry name" value="RIBOSOMAL_L14"/>
    <property type="match status" value="1"/>
</dbReference>